<reference key="1">
    <citation type="journal article" date="2000" name="Science">
        <title>Complete genome sequence of Neisseria meningitidis serogroup B strain MC58.</title>
        <authorList>
            <person name="Tettelin H."/>
            <person name="Saunders N.J."/>
            <person name="Heidelberg J.F."/>
            <person name="Jeffries A.C."/>
            <person name="Nelson K.E."/>
            <person name="Eisen J.A."/>
            <person name="Ketchum K.A."/>
            <person name="Hood D.W."/>
            <person name="Peden J.F."/>
            <person name="Dodson R.J."/>
            <person name="Nelson W.C."/>
            <person name="Gwinn M.L."/>
            <person name="DeBoy R.T."/>
            <person name="Peterson J.D."/>
            <person name="Hickey E.K."/>
            <person name="Haft D.H."/>
            <person name="Salzberg S.L."/>
            <person name="White O."/>
            <person name="Fleischmann R.D."/>
            <person name="Dougherty B.A."/>
            <person name="Mason T.M."/>
            <person name="Ciecko A."/>
            <person name="Parksey D.S."/>
            <person name="Blair E."/>
            <person name="Cittone H."/>
            <person name="Clark E.B."/>
            <person name="Cotton M.D."/>
            <person name="Utterback T.R."/>
            <person name="Khouri H.M."/>
            <person name="Qin H."/>
            <person name="Vamathevan J.J."/>
            <person name="Gill J."/>
            <person name="Scarlato V."/>
            <person name="Masignani V."/>
            <person name="Pizza M."/>
            <person name="Grandi G."/>
            <person name="Sun L."/>
            <person name="Smith H.O."/>
            <person name="Fraser C.M."/>
            <person name="Moxon E.R."/>
            <person name="Rappuoli R."/>
            <person name="Venter J.C."/>
        </authorList>
    </citation>
    <scope>NUCLEOTIDE SEQUENCE [LARGE SCALE GENOMIC DNA]</scope>
    <source>
        <strain>ATCC BAA-335 / MC58</strain>
    </source>
</reference>
<comment type="function">
    <text evidence="1">Plays an essential role in the initiation and regulation of chromosomal replication. ATP-DnaA binds to the origin of replication (oriC) to initiate formation of the DNA replication initiation complex once per cell cycle. Binds the DnaA box (a 9 base pair repeat at the origin) and separates the double-stranded (ds)DNA. Forms a right-handed helical filament on oriC DNA; dsDNA binds to the exterior of the filament while single-stranded (ss)DNA is stabiized in the filament's interior. The ATP-DnaA-oriC complex binds and stabilizes one strand of the AT-rich DNA unwinding element (DUE), permitting loading of DNA polymerase. After initiation quickly degrades to an ADP-DnaA complex that is not apt for DNA replication. Binds acidic phospholipids.</text>
</comment>
<comment type="subunit">
    <text evidence="1">Oligomerizes as a right-handed, spiral filament on DNA at oriC.</text>
</comment>
<comment type="subcellular location">
    <subcellularLocation>
        <location evidence="1">Cytoplasm</location>
    </subcellularLocation>
</comment>
<comment type="domain">
    <text evidence="1">Domain I is involved in oligomerization and binding regulators, domain II is flexibile and of varying length in different bacteria, domain III forms the AAA+ region, while domain IV binds dsDNA.</text>
</comment>
<comment type="similarity">
    <text evidence="1">Belongs to the DnaA family.</text>
</comment>
<accession>Q9JXS7</accession>
<keyword id="KW-0067">ATP-binding</keyword>
<keyword id="KW-0963">Cytoplasm</keyword>
<keyword id="KW-0235">DNA replication</keyword>
<keyword id="KW-0238">DNA-binding</keyword>
<keyword id="KW-0446">Lipid-binding</keyword>
<keyword id="KW-0547">Nucleotide-binding</keyword>
<keyword id="KW-1185">Reference proteome</keyword>
<evidence type="ECO:0000255" key="1">
    <source>
        <dbReference type="HAMAP-Rule" id="MF_00377"/>
    </source>
</evidence>
<evidence type="ECO:0000256" key="2">
    <source>
        <dbReference type="SAM" id="MobiDB-lite"/>
    </source>
</evidence>
<sequence>MTLAEFWPLCLRRLHDMLPQGQFAQWIAPLTVGEEGGVWVVYGKNQFACNMLKSQFAGKIEAVREELAAGRSAFVFKPGEGVRYEMAAVEGAVEPAEPSLHAVSEGMPVQEVLLDELPSEEPVKPAASKTAADILAERMKNLPHEPRQAAGSASRPESVAVAKARTDVQRDAEEARYEQTNLSPDYTFDTLVEGKGNRLAAAAAQAIAESPGQSYNPFFLYGSTGLGKTHLVQAVGNELLKNRPDAKVRYMHSDDYIRSFMKAVRNNTYDVFKQQYKQYDLLIIDDIQFIKGKDRTMEEFFYLYNHFHNEKKQLILTCDVLPAKIEGMDDRLKSRFSWGLTLELEPPELEMRIAILQKKAEAAGISIEDEAALFIANLIRSNVRELEGAFNRVGASSRFMNRPVIDIDLARTALQDIIAEKHKVITADIIIDAVAKYYRIKISDVLGKKRTRNIARPRQVAMSLTKELTTLSLPSIGDSFGGRDHTTVMHGIRAVAKLREEDPELAQDYEKLLILIQN</sequence>
<protein>
    <recommendedName>
        <fullName evidence="1">Chromosomal replication initiator protein DnaA</fullName>
    </recommendedName>
</protein>
<organism>
    <name type="scientific">Neisseria meningitidis serogroup B (strain ATCC BAA-335 / MC58)</name>
    <dbReference type="NCBI Taxonomy" id="122586"/>
    <lineage>
        <taxon>Bacteria</taxon>
        <taxon>Pseudomonadati</taxon>
        <taxon>Pseudomonadota</taxon>
        <taxon>Betaproteobacteria</taxon>
        <taxon>Neisseriales</taxon>
        <taxon>Neisseriaceae</taxon>
        <taxon>Neisseria</taxon>
    </lineage>
</organism>
<dbReference type="EMBL" id="AE002098">
    <property type="protein sequence ID" value="AAF42233.1"/>
    <property type="molecule type" value="Genomic_DNA"/>
</dbReference>
<dbReference type="PIR" id="F81027">
    <property type="entry name" value="F81027"/>
</dbReference>
<dbReference type="RefSeq" id="NP_274897.1">
    <property type="nucleotide sequence ID" value="NC_003112.2"/>
</dbReference>
<dbReference type="RefSeq" id="WP_002223060.1">
    <property type="nucleotide sequence ID" value="NC_003112.2"/>
</dbReference>
<dbReference type="SMR" id="Q9JXS7"/>
<dbReference type="FunCoup" id="Q9JXS7">
    <property type="interactions" value="250"/>
</dbReference>
<dbReference type="STRING" id="122586.NMB1903"/>
<dbReference type="PaxDb" id="122586-NMB1903"/>
<dbReference type="KEGG" id="nme:NMB1903"/>
<dbReference type="PATRIC" id="fig|122586.8.peg.2429"/>
<dbReference type="HOGENOM" id="CLU_026910_0_1_4"/>
<dbReference type="InParanoid" id="Q9JXS7"/>
<dbReference type="OrthoDB" id="9807019at2"/>
<dbReference type="Proteomes" id="UP000000425">
    <property type="component" value="Chromosome"/>
</dbReference>
<dbReference type="GO" id="GO:0005737">
    <property type="term" value="C:cytoplasm"/>
    <property type="evidence" value="ECO:0007669"/>
    <property type="project" value="UniProtKB-SubCell"/>
</dbReference>
<dbReference type="GO" id="GO:0005886">
    <property type="term" value="C:plasma membrane"/>
    <property type="evidence" value="ECO:0000318"/>
    <property type="project" value="GO_Central"/>
</dbReference>
<dbReference type="GO" id="GO:0005524">
    <property type="term" value="F:ATP binding"/>
    <property type="evidence" value="ECO:0007669"/>
    <property type="project" value="UniProtKB-UniRule"/>
</dbReference>
<dbReference type="GO" id="GO:0016887">
    <property type="term" value="F:ATP hydrolysis activity"/>
    <property type="evidence" value="ECO:0007669"/>
    <property type="project" value="InterPro"/>
</dbReference>
<dbReference type="GO" id="GO:0003688">
    <property type="term" value="F:DNA replication origin binding"/>
    <property type="evidence" value="ECO:0000318"/>
    <property type="project" value="GO_Central"/>
</dbReference>
<dbReference type="GO" id="GO:0008289">
    <property type="term" value="F:lipid binding"/>
    <property type="evidence" value="ECO:0007669"/>
    <property type="project" value="UniProtKB-KW"/>
</dbReference>
<dbReference type="GO" id="GO:0006260">
    <property type="term" value="P:DNA replication"/>
    <property type="evidence" value="ECO:0000318"/>
    <property type="project" value="GO_Central"/>
</dbReference>
<dbReference type="GO" id="GO:0006270">
    <property type="term" value="P:DNA replication initiation"/>
    <property type="evidence" value="ECO:0000318"/>
    <property type="project" value="GO_Central"/>
</dbReference>
<dbReference type="GO" id="GO:0006275">
    <property type="term" value="P:regulation of DNA replication"/>
    <property type="evidence" value="ECO:0007669"/>
    <property type="project" value="UniProtKB-UniRule"/>
</dbReference>
<dbReference type="CDD" id="cd00009">
    <property type="entry name" value="AAA"/>
    <property type="match status" value="1"/>
</dbReference>
<dbReference type="CDD" id="cd06571">
    <property type="entry name" value="Bac_DnaA_C"/>
    <property type="match status" value="1"/>
</dbReference>
<dbReference type="FunFam" id="1.10.1750.10:FF:000006">
    <property type="entry name" value="Chromosomal replication initiator protein DnaA"/>
    <property type="match status" value="1"/>
</dbReference>
<dbReference type="FunFam" id="1.10.8.60:FF:000003">
    <property type="entry name" value="Chromosomal replication initiator protein DnaA"/>
    <property type="match status" value="1"/>
</dbReference>
<dbReference type="FunFam" id="3.40.50.300:FF:000668">
    <property type="entry name" value="Chromosomal replication initiator protein DnaA"/>
    <property type="match status" value="1"/>
</dbReference>
<dbReference type="Gene3D" id="1.10.1750.10">
    <property type="match status" value="1"/>
</dbReference>
<dbReference type="Gene3D" id="1.10.8.60">
    <property type="match status" value="1"/>
</dbReference>
<dbReference type="Gene3D" id="3.30.300.180">
    <property type="match status" value="1"/>
</dbReference>
<dbReference type="Gene3D" id="3.40.50.300">
    <property type="entry name" value="P-loop containing nucleotide triphosphate hydrolases"/>
    <property type="match status" value="1"/>
</dbReference>
<dbReference type="HAMAP" id="MF_00377">
    <property type="entry name" value="DnaA_bact"/>
    <property type="match status" value="1"/>
</dbReference>
<dbReference type="InterPro" id="IPR003593">
    <property type="entry name" value="AAA+_ATPase"/>
</dbReference>
<dbReference type="InterPro" id="IPR001957">
    <property type="entry name" value="Chromosome_initiator_DnaA"/>
</dbReference>
<dbReference type="InterPro" id="IPR020591">
    <property type="entry name" value="Chromosome_initiator_DnaA-like"/>
</dbReference>
<dbReference type="InterPro" id="IPR018312">
    <property type="entry name" value="Chromosome_initiator_DnaA_CS"/>
</dbReference>
<dbReference type="InterPro" id="IPR013159">
    <property type="entry name" value="DnaA_C"/>
</dbReference>
<dbReference type="InterPro" id="IPR013317">
    <property type="entry name" value="DnaA_dom"/>
</dbReference>
<dbReference type="InterPro" id="IPR024633">
    <property type="entry name" value="DnaA_N_dom"/>
</dbReference>
<dbReference type="InterPro" id="IPR038454">
    <property type="entry name" value="DnaA_N_sf"/>
</dbReference>
<dbReference type="InterPro" id="IPR027417">
    <property type="entry name" value="P-loop_NTPase"/>
</dbReference>
<dbReference type="InterPro" id="IPR010921">
    <property type="entry name" value="Trp_repressor/repl_initiator"/>
</dbReference>
<dbReference type="NCBIfam" id="TIGR00362">
    <property type="entry name" value="DnaA"/>
    <property type="match status" value="1"/>
</dbReference>
<dbReference type="PANTHER" id="PTHR30050">
    <property type="entry name" value="CHROMOSOMAL REPLICATION INITIATOR PROTEIN DNAA"/>
    <property type="match status" value="1"/>
</dbReference>
<dbReference type="PANTHER" id="PTHR30050:SF2">
    <property type="entry name" value="CHROMOSOMAL REPLICATION INITIATOR PROTEIN DNAA"/>
    <property type="match status" value="1"/>
</dbReference>
<dbReference type="Pfam" id="PF00308">
    <property type="entry name" value="Bac_DnaA"/>
    <property type="match status" value="1"/>
</dbReference>
<dbReference type="Pfam" id="PF08299">
    <property type="entry name" value="Bac_DnaA_C"/>
    <property type="match status" value="1"/>
</dbReference>
<dbReference type="Pfam" id="PF11638">
    <property type="entry name" value="DnaA_N"/>
    <property type="match status" value="1"/>
</dbReference>
<dbReference type="PRINTS" id="PR00051">
    <property type="entry name" value="DNAA"/>
</dbReference>
<dbReference type="SMART" id="SM00382">
    <property type="entry name" value="AAA"/>
    <property type="match status" value="1"/>
</dbReference>
<dbReference type="SMART" id="SM00760">
    <property type="entry name" value="Bac_DnaA_C"/>
    <property type="match status" value="1"/>
</dbReference>
<dbReference type="SUPFAM" id="SSF52540">
    <property type="entry name" value="P-loop containing nucleoside triphosphate hydrolases"/>
    <property type="match status" value="1"/>
</dbReference>
<dbReference type="SUPFAM" id="SSF48295">
    <property type="entry name" value="TrpR-like"/>
    <property type="match status" value="1"/>
</dbReference>
<dbReference type="PROSITE" id="PS01008">
    <property type="entry name" value="DNAA"/>
    <property type="match status" value="1"/>
</dbReference>
<proteinExistence type="inferred from homology"/>
<name>DNAA_NEIMB</name>
<feature type="chain" id="PRO_0000114221" description="Chromosomal replication initiator protein DnaA">
    <location>
        <begin position="1"/>
        <end position="518"/>
    </location>
</feature>
<feature type="region of interest" description="Domain I, interacts with DnaA modulators" evidence="1">
    <location>
        <begin position="1"/>
        <end position="72"/>
    </location>
</feature>
<feature type="region of interest" description="Domain II" evidence="1">
    <location>
        <begin position="72"/>
        <end position="180"/>
    </location>
</feature>
<feature type="region of interest" description="Disordered" evidence="2">
    <location>
        <begin position="145"/>
        <end position="172"/>
    </location>
</feature>
<feature type="region of interest" description="Domain III, AAA+ region" evidence="1">
    <location>
        <begin position="181"/>
        <end position="397"/>
    </location>
</feature>
<feature type="region of interest" description="Domain IV, binds dsDNA" evidence="1">
    <location>
        <begin position="398"/>
        <end position="518"/>
    </location>
</feature>
<feature type="binding site" evidence="1">
    <location>
        <position position="225"/>
    </location>
    <ligand>
        <name>ATP</name>
        <dbReference type="ChEBI" id="CHEBI:30616"/>
    </ligand>
</feature>
<feature type="binding site" evidence="1">
    <location>
        <position position="227"/>
    </location>
    <ligand>
        <name>ATP</name>
        <dbReference type="ChEBI" id="CHEBI:30616"/>
    </ligand>
</feature>
<feature type="binding site" evidence="1">
    <location>
        <position position="228"/>
    </location>
    <ligand>
        <name>ATP</name>
        <dbReference type="ChEBI" id="CHEBI:30616"/>
    </ligand>
</feature>
<feature type="binding site" evidence="1">
    <location>
        <position position="229"/>
    </location>
    <ligand>
        <name>ATP</name>
        <dbReference type="ChEBI" id="CHEBI:30616"/>
    </ligand>
</feature>
<gene>
    <name evidence="1" type="primary">dnaA</name>
    <name type="ordered locus">NMB1903</name>
</gene>